<protein>
    <recommendedName>
        <fullName evidence="25 26">Protein argonaute 4</fullName>
        <shortName evidence="25 26">AtAGO4</shortName>
    </recommendedName>
    <alternativeName>
        <fullName>Protein OVEREXPRESSOR OF CATIONIC PEROXIDASE 11</fullName>
    </alternativeName>
</protein>
<gene>
    <name evidence="25 26" type="primary">AGO4</name>
    <name type="synonym">OCP11</name>
    <name evidence="28" type="ordered locus">At2g27040</name>
    <name evidence="29" type="ORF">T20P8.9</name>
</gene>
<dbReference type="EMBL" id="AC005623">
    <property type="protein sequence ID" value="AAC77862.2"/>
    <property type="molecule type" value="Genomic_DNA"/>
</dbReference>
<dbReference type="EMBL" id="CP002685">
    <property type="protein sequence ID" value="AEC07928.1"/>
    <property type="molecule type" value="Genomic_DNA"/>
</dbReference>
<dbReference type="EMBL" id="CP002685">
    <property type="protein sequence ID" value="AEC07929.1"/>
    <property type="molecule type" value="Genomic_DNA"/>
</dbReference>
<dbReference type="EMBL" id="AY035081">
    <property type="protein sequence ID" value="AAK59586.1"/>
    <property type="molecule type" value="mRNA"/>
</dbReference>
<dbReference type="EMBL" id="AY051033">
    <property type="protein sequence ID" value="AAK93710.1"/>
    <property type="molecule type" value="mRNA"/>
</dbReference>
<dbReference type="PIR" id="A84668">
    <property type="entry name" value="A84668"/>
</dbReference>
<dbReference type="RefSeq" id="NP_001189613.1">
    <property type="nucleotide sequence ID" value="NM_001202684.1"/>
</dbReference>
<dbReference type="RefSeq" id="NP_565633.1">
    <property type="nucleotide sequence ID" value="NM_128262.4"/>
</dbReference>
<dbReference type="SMR" id="Q9ZVD5"/>
<dbReference type="BioGRID" id="2598">
    <property type="interactions" value="5"/>
</dbReference>
<dbReference type="DIP" id="DIP-53402N"/>
<dbReference type="FunCoup" id="Q9ZVD5">
    <property type="interactions" value="614"/>
</dbReference>
<dbReference type="IntAct" id="Q9ZVD5">
    <property type="interactions" value="7"/>
</dbReference>
<dbReference type="MINT" id="Q9ZVD5"/>
<dbReference type="STRING" id="3702.Q9ZVD5"/>
<dbReference type="MoonProt" id="Q9ZVD5"/>
<dbReference type="iPTMnet" id="Q9ZVD5"/>
<dbReference type="PaxDb" id="3702-AT2G27040.2"/>
<dbReference type="ProteomicsDB" id="244704"/>
<dbReference type="EnsemblPlants" id="AT2G27040.1">
    <property type="protein sequence ID" value="AT2G27040.1"/>
    <property type="gene ID" value="AT2G27040"/>
</dbReference>
<dbReference type="EnsemblPlants" id="AT2G27040.2">
    <property type="protein sequence ID" value="AT2G27040.2"/>
    <property type="gene ID" value="AT2G27040"/>
</dbReference>
<dbReference type="GeneID" id="817246"/>
<dbReference type="Gramene" id="AT2G27040.1">
    <property type="protein sequence ID" value="AT2G27040.1"/>
    <property type="gene ID" value="AT2G27040"/>
</dbReference>
<dbReference type="Gramene" id="AT2G27040.2">
    <property type="protein sequence ID" value="AT2G27040.2"/>
    <property type="gene ID" value="AT2G27040"/>
</dbReference>
<dbReference type="KEGG" id="ath:AT2G27040"/>
<dbReference type="Araport" id="AT2G27040"/>
<dbReference type="TAIR" id="AT2G27040">
    <property type="gene designation" value="AGO4"/>
</dbReference>
<dbReference type="eggNOG" id="KOG1041">
    <property type="taxonomic scope" value="Eukaryota"/>
</dbReference>
<dbReference type="HOGENOM" id="CLU_004544_2_0_1"/>
<dbReference type="InParanoid" id="Q9ZVD5"/>
<dbReference type="OMA" id="PTNQEYK"/>
<dbReference type="PhylomeDB" id="Q9ZVD5"/>
<dbReference type="PRO" id="PR:Q9ZVD5"/>
<dbReference type="Proteomes" id="UP000006548">
    <property type="component" value="Chromosome 2"/>
</dbReference>
<dbReference type="ExpressionAtlas" id="Q9ZVD5">
    <property type="expression patterns" value="baseline and differential"/>
</dbReference>
<dbReference type="GO" id="GO:0015030">
    <property type="term" value="C:Cajal body"/>
    <property type="evidence" value="ECO:0000314"/>
    <property type="project" value="TAIR"/>
</dbReference>
<dbReference type="GO" id="GO:0036464">
    <property type="term" value="C:cytoplasmic ribonucleoprotein granule"/>
    <property type="evidence" value="ECO:0000314"/>
    <property type="project" value="FlyBase"/>
</dbReference>
<dbReference type="GO" id="GO:0000791">
    <property type="term" value="C:euchromatin"/>
    <property type="evidence" value="ECO:0000314"/>
    <property type="project" value="TAIR"/>
</dbReference>
<dbReference type="GO" id="GO:0005730">
    <property type="term" value="C:nucleolus"/>
    <property type="evidence" value="ECO:0000314"/>
    <property type="project" value="TAIR"/>
</dbReference>
<dbReference type="GO" id="GO:0005654">
    <property type="term" value="C:nucleoplasm"/>
    <property type="evidence" value="ECO:0000314"/>
    <property type="project" value="UniProtKB"/>
</dbReference>
<dbReference type="GO" id="GO:1990904">
    <property type="term" value="C:ribonucleoprotein complex"/>
    <property type="evidence" value="ECO:0007669"/>
    <property type="project" value="UniProtKB-KW"/>
</dbReference>
<dbReference type="GO" id="GO:0003682">
    <property type="term" value="F:chromatin binding"/>
    <property type="evidence" value="ECO:0000314"/>
    <property type="project" value="UniProtKB"/>
</dbReference>
<dbReference type="GO" id="GO:0035198">
    <property type="term" value="F:miRNA binding"/>
    <property type="evidence" value="ECO:0000314"/>
    <property type="project" value="CAFA"/>
</dbReference>
<dbReference type="GO" id="GO:0004521">
    <property type="term" value="F:RNA endonuclease activity"/>
    <property type="evidence" value="ECO:0000314"/>
    <property type="project" value="FlyBase"/>
</dbReference>
<dbReference type="GO" id="GO:0035197">
    <property type="term" value="F:siRNA binding"/>
    <property type="evidence" value="ECO:0000314"/>
    <property type="project" value="FlyBase"/>
</dbReference>
<dbReference type="GO" id="GO:0042742">
    <property type="term" value="P:defense response to bacterium"/>
    <property type="evidence" value="ECO:0000315"/>
    <property type="project" value="TAIR"/>
</dbReference>
<dbReference type="GO" id="GO:0051607">
    <property type="term" value="P:defense response to virus"/>
    <property type="evidence" value="ECO:0000314"/>
    <property type="project" value="TAIR"/>
</dbReference>
<dbReference type="GO" id="GO:0080188">
    <property type="term" value="P:gene silencing by siRNA-directed DNA methylation"/>
    <property type="evidence" value="ECO:0000314"/>
    <property type="project" value="FlyBase"/>
</dbReference>
<dbReference type="GO" id="GO:0031507">
    <property type="term" value="P:heterochromatin formation"/>
    <property type="evidence" value="ECO:0000315"/>
    <property type="project" value="UniProtKB"/>
</dbReference>
<dbReference type="GO" id="GO:0006417">
    <property type="term" value="P:regulation of translation"/>
    <property type="evidence" value="ECO:0007669"/>
    <property type="project" value="UniProtKB-KW"/>
</dbReference>
<dbReference type="GO" id="GO:0031048">
    <property type="term" value="P:regulatory ncRNA-mediated heterochromatin formation"/>
    <property type="evidence" value="ECO:0000304"/>
    <property type="project" value="TAIR"/>
</dbReference>
<dbReference type="GO" id="GO:0030422">
    <property type="term" value="P:siRNA processing"/>
    <property type="evidence" value="ECO:0000314"/>
    <property type="project" value="FlyBase"/>
</dbReference>
<dbReference type="CDD" id="cd02846">
    <property type="entry name" value="PAZ_argonaute_like"/>
    <property type="match status" value="1"/>
</dbReference>
<dbReference type="CDD" id="cd04657">
    <property type="entry name" value="Piwi_ago-like"/>
    <property type="match status" value="1"/>
</dbReference>
<dbReference type="FunFam" id="3.30.420.10:FF:000091">
    <property type="entry name" value="Protein argonaute 3"/>
    <property type="match status" value="1"/>
</dbReference>
<dbReference type="FunFam" id="2.170.260.10:FF:000008">
    <property type="entry name" value="Protein argonaute 7"/>
    <property type="match status" value="1"/>
</dbReference>
<dbReference type="Gene3D" id="3.40.50.2300">
    <property type="match status" value="1"/>
</dbReference>
<dbReference type="Gene3D" id="2.170.260.10">
    <property type="entry name" value="paz domain"/>
    <property type="match status" value="1"/>
</dbReference>
<dbReference type="Gene3D" id="3.30.420.10">
    <property type="entry name" value="Ribonuclease H-like superfamily/Ribonuclease H"/>
    <property type="match status" value="1"/>
</dbReference>
<dbReference type="InterPro" id="IPR014811">
    <property type="entry name" value="ArgoL1"/>
</dbReference>
<dbReference type="InterPro" id="IPR032472">
    <property type="entry name" value="ArgoL2"/>
</dbReference>
<dbReference type="InterPro" id="IPR032473">
    <property type="entry name" value="Argonaute_Mid_dom"/>
</dbReference>
<dbReference type="InterPro" id="IPR032474">
    <property type="entry name" value="Argonaute_N"/>
</dbReference>
<dbReference type="InterPro" id="IPR003100">
    <property type="entry name" value="PAZ_dom"/>
</dbReference>
<dbReference type="InterPro" id="IPR036085">
    <property type="entry name" value="PAZ_dom_sf"/>
</dbReference>
<dbReference type="InterPro" id="IPR003165">
    <property type="entry name" value="Piwi"/>
</dbReference>
<dbReference type="InterPro" id="IPR045246">
    <property type="entry name" value="Piwi_ago-like"/>
</dbReference>
<dbReference type="InterPro" id="IPR012337">
    <property type="entry name" value="RNaseH-like_sf"/>
</dbReference>
<dbReference type="InterPro" id="IPR036397">
    <property type="entry name" value="RNaseH_sf"/>
</dbReference>
<dbReference type="PANTHER" id="PTHR22891">
    <property type="entry name" value="EUKARYOTIC TRANSLATION INITIATION FACTOR 2C"/>
    <property type="match status" value="1"/>
</dbReference>
<dbReference type="Pfam" id="PF08699">
    <property type="entry name" value="ArgoL1"/>
    <property type="match status" value="1"/>
</dbReference>
<dbReference type="Pfam" id="PF16488">
    <property type="entry name" value="ArgoL2"/>
    <property type="match status" value="1"/>
</dbReference>
<dbReference type="Pfam" id="PF16487">
    <property type="entry name" value="ArgoMid"/>
    <property type="match status" value="1"/>
</dbReference>
<dbReference type="Pfam" id="PF16486">
    <property type="entry name" value="ArgoN"/>
    <property type="match status" value="1"/>
</dbReference>
<dbReference type="Pfam" id="PF02170">
    <property type="entry name" value="PAZ"/>
    <property type="match status" value="1"/>
</dbReference>
<dbReference type="Pfam" id="PF02171">
    <property type="entry name" value="Piwi"/>
    <property type="match status" value="1"/>
</dbReference>
<dbReference type="SMART" id="SM01163">
    <property type="entry name" value="DUF1785"/>
    <property type="match status" value="1"/>
</dbReference>
<dbReference type="SMART" id="SM00950">
    <property type="entry name" value="Piwi"/>
    <property type="match status" value="1"/>
</dbReference>
<dbReference type="SUPFAM" id="SSF101690">
    <property type="entry name" value="PAZ domain"/>
    <property type="match status" value="1"/>
</dbReference>
<dbReference type="SUPFAM" id="SSF53098">
    <property type="entry name" value="Ribonuclease H-like"/>
    <property type="match status" value="1"/>
</dbReference>
<dbReference type="PROSITE" id="PS50821">
    <property type="entry name" value="PAZ"/>
    <property type="match status" value="1"/>
</dbReference>
<dbReference type="PROSITE" id="PS50822">
    <property type="entry name" value="PIWI"/>
    <property type="match status" value="1"/>
</dbReference>
<feature type="chain" id="PRO_0000404667" description="Protein argonaute 4">
    <location>
        <begin position="1"/>
        <end position="924"/>
    </location>
</feature>
<feature type="domain" description="PAZ" evidence="1">
    <location>
        <begin position="292"/>
        <end position="408"/>
    </location>
</feature>
<feature type="domain" description="Piwi" evidence="2">
    <location>
        <begin position="577"/>
        <end position="885"/>
    </location>
</feature>
<feature type="region of interest" description="Disordered" evidence="4">
    <location>
        <begin position="1"/>
        <end position="37"/>
    </location>
</feature>
<feature type="region of interest" description="Disordered" evidence="4">
    <location>
        <begin position="159"/>
        <end position="185"/>
    </location>
</feature>
<feature type="short sequence motif" description="Nuclear localization signal" evidence="3">
    <location>
        <begin position="584"/>
        <end position="591"/>
    </location>
</feature>
<feature type="compositionally biased region" description="Pro residues" evidence="4">
    <location>
        <begin position="26"/>
        <end position="37"/>
    </location>
</feature>
<feature type="compositionally biased region" description="Low complexity" evidence="4">
    <location>
        <begin position="162"/>
        <end position="173"/>
    </location>
</feature>
<feature type="mutagenesis site" description="In ago4-2; no effect on RNA binding, but loss of slicer activity." evidence="13">
    <original>E</original>
    <variation>K</variation>
    <location>
        <position position="641"/>
    </location>
</feature>
<feature type="mutagenesis site" description="No effect on RNA binding, but loss of slicer activity." evidence="10">
    <original>D</original>
    <variation>A</variation>
    <location>
        <position position="660"/>
    </location>
</feature>
<feature type="mutagenesis site" description="No effect on RNA binding, but loss of slicer activity." evidence="10">
    <original>D</original>
    <variation>A</variation>
    <location>
        <position position="742"/>
    </location>
</feature>
<feature type="mutagenesis site" description="No effect on RNA binding, but loss of slicer activity." evidence="10">
    <original>H</original>
    <variation>A</variation>
    <location>
        <position position="874"/>
    </location>
</feature>
<organism>
    <name type="scientific">Arabidopsis thaliana</name>
    <name type="common">Mouse-ear cress</name>
    <dbReference type="NCBI Taxonomy" id="3702"/>
    <lineage>
        <taxon>Eukaryota</taxon>
        <taxon>Viridiplantae</taxon>
        <taxon>Streptophyta</taxon>
        <taxon>Embryophyta</taxon>
        <taxon>Tracheophyta</taxon>
        <taxon>Spermatophyta</taxon>
        <taxon>Magnoliopsida</taxon>
        <taxon>eudicotyledons</taxon>
        <taxon>Gunneridae</taxon>
        <taxon>Pentapetalae</taxon>
        <taxon>rosids</taxon>
        <taxon>malvids</taxon>
        <taxon>Brassicales</taxon>
        <taxon>Brassicaceae</taxon>
        <taxon>Camelineae</taxon>
        <taxon>Arabidopsis</taxon>
    </lineage>
</organism>
<sequence length="924" mass="102840">MDSTNGNGADLESANGANGSGVTEALPPPPPVIPPNVEPVRVKTELAEKKGPVRVPMARKGFGTRGQKIPLLTNHFKVDVANLQGHFFHYSVALFYDDGRPVEQKGVGRKILDKVHQTYHSDLDGKEFAYDGEKTLFTYGALPSNKMDFSVVLEEVSATRANGNGSPNGNESPSDGDRKRLRRPNRSKNFRVEISYAAKIPLQALANAMRGQESENSQEAIRVLDIILRQHAARQGCLLVRQSFFHNDPTNCEPVGGNILGCRGFHSSFRTTQGGMSLNMDVTTTMIIKPGPVVDFLIANQNARDPYSIDWSKAKRTLKNLRVKVSPSGQEFKITGLSDKPCREQTFELKKRNPNENGEFETTEVTVADYFRDTRHIDLQYSADLPCINVGKPKRPTYIPLELCALVPLQRYTKALTTFQRSALVEKSRQKPQERMTVLSKALKVSNYDAEPLLRSCGISISSNFTQVEGRVLPAPKLKMGCGSETFPRNGRWNFNNKEFVEPTKIQRWVVVNFSARCNVRQVVDDLIKIGGSKGIEIASPFQVFEEGNQFRRAPPMIRVENMFKDIQSKLPGVPQFILCVLPDKKNSDLYGPWKKKNLTEFGIVTQCMAPTRQPNDQYLTNLLLKINAKLGGLNSMLSVERTPAFTVISKVPTIILGMDVSHGSPGQSDVPSIAAVVSSREWPLISKYRASVRTQPSKAEMIESLVKKNGTEDDGIIKELLVDFYTSSNKRKPEHIIIFRDGVSESQFNQVLNIELDQIIEACKLLDANWNPKFLLLVAQKNHHTKFFQPTSPENVPPGTIIDNKICHPKNNDFYLCAHAGMIGTTRPTHYHVLYDEIGFSADELQELVHSLSYVYQRSTSAISVVAPICYAHLAAAQLGTFMKFEDQSETSSSHGGITAPGPISVAQLPRLKDNVANSMFFC</sequence>
<name>AGO4_ARATH</name>
<comment type="function">
    <text evidence="5 6 7 8 9 10 11 12 13 15 16 18 20 22">Together with RDM3, required for transcriptional gene silencing (TGS) by DNA methylation and repressive histone modifications (H3K9me2) of several chromatin loci (PubMed:21738482). Component of the RISC complex that associate with the small interfering RNA (siRNA) pathway involved in direct cytosine methylation at endogenous DNA repeats. Forms a AGO4/NRPE1/siRNA complex in cajal body, facilitating its function in RNA-directed gene silencing of target loci. Required for CpNpG and asymmetric DNA methylation as well as histone H3 'Lys-9' methylation (H3K9me) at SUP and SN1 loci. May be not required for CpG methylation. Required for the production and maintenance of retrotransposon SN1 and Copia and ribosomal 5S 25 nucleotide siRNAs specialized in gene silencing at chromatin level. Involved in de novo methylation of FWA gene and required for the maintenance of RNA-directed DNA methylation (RdDM) triggered by inverted repeat transgenes. Interacts with miRNA miR390 and miR172, targeting respectively TAS3 and AP2 mRNAs, and mediates cleavage of miRNA targets. Associates mainly with small RNAs of 24 nucleotide in length and preferentially recruits small RNAs with a 5' terminal adenosine. Targeted by the turnip yellows virus (TuYV) protein P0 (via F-box-like domain) for probable proteasome degradation and thereby inactivating AGO4 function in RNA silencing. Required for resistance to the bacterial pathogen P.syringae. Works independently of the RdDM pathway in mediating resistance to P.syringae. RdDM is involved in viral genome methylation as an epigenetic defense against geminiviruses (PubMed:12522258, PubMed:14988555, PubMed:15242620, PubMed:16839878, PubMed:16839879, PubMed:16998468, PubMed:17869110, PubMed:17938239, PubMed:17993621, PubMed:18342361, PubMed:18596098, PubMed:19377477, PubMed:20173091).</text>
</comment>
<comment type="subunit">
    <text evidence="9 12 17 18 19 21 22 23 24">Interacts with NRPE1 (via C-terminus). Binding to NRPE1 is required for its function in RdDM. Interacts with turnip crinkle virus (TCV) capsid protein P38; this interaction inhibits probably RNA silencing ability of AGO4. Interacts with SDE3 (PubMed:16839879, PubMed:17938239, PubMed:19377477, PubMed:20439431, PubMed:22940249). Binds to RDM3 (PubMed:19343051, PubMed:19410546). Binds chromatin at loci subject to transcriptional silencing (PubMed:21738482). Interacts with MBD6 (PubMed:28229965).</text>
</comment>
<comment type="interaction">
    <interactant intactId="EBI-2352199">
        <id>Q9ZVD5</id>
    </interactant>
    <interactant intactId="EBI-10815073">
        <id>Q9LJF5</id>
        <label>DRB3</label>
    </interactant>
    <organismsDiffer>false</organismsDiffer>
    <experiments>2</experiments>
</comment>
<comment type="interaction">
    <interactant intactId="EBI-2352199">
        <id>Q9ZVD5</id>
    </interactant>
    <interactant intactId="EBI-6923904">
        <id>Q9M548</id>
        <label>DRM2</label>
    </interactant>
    <organismsDiffer>false</organismsDiffer>
    <experiments>2</experiments>
</comment>
<comment type="interaction">
    <interactant intactId="EBI-2352199">
        <id>Q9ZVD5</id>
    </interactant>
    <interactant intactId="EBI-2352263">
        <id>Q5D869</id>
        <label>NRPE1</label>
    </interactant>
    <organismsDiffer>false</organismsDiffer>
    <experiments>3</experiments>
</comment>
<comment type="interaction">
    <interactant intactId="EBI-2352199">
        <id>Q9ZVD5</id>
    </interactant>
    <interactant intactId="EBI-15850569">
        <id>Q9LUJ3</id>
        <label>RDM1</label>
    </interactant>
    <organismsDiffer>false</organismsDiffer>
    <experiments>2</experiments>
</comment>
<comment type="interaction">
    <interactant intactId="EBI-2352199">
        <id>Q9ZVD5</id>
    </interactant>
    <interactant intactId="EBI-2352225">
        <id>F4JW79</id>
        <label>RDM3</label>
    </interactant>
    <organismsDiffer>false</organismsDiffer>
    <experiments>5</experiments>
</comment>
<comment type="subcellular location">
    <subcellularLocation>
        <location evidence="8">Nucleus</location>
        <location evidence="8">Nucleolus</location>
    </subcellularLocation>
    <subcellularLocation>
        <location evidence="19">Nucleus</location>
        <location evidence="19">Nucleoplasm</location>
    </subcellularLocation>
    <subcellularLocation>
        <location evidence="9 14">Nucleus</location>
        <location evidence="9 14">Cajal body</location>
    </subcellularLocation>
    <text evidence="14 19">Also located in AB-bodies that are distincts from the Cajal bodies and immediately adjacent to the condensed 45S ribosomal DNA (rDNA) loci (PubMed:18266474). Colocalizes with AGO4 and polymerase V in the nucleoplasm (PubMed:19410546).</text>
</comment>
<comment type="tissue specificity">
    <text evidence="20">Expressed in embryos, mature leaves, vascular tissue of the sepals, stamens and stigma, at the tip of the style and siliques.</text>
</comment>
<comment type="disruption phenotype">
    <text evidence="5 13 22">Decreased DNA cytosine methylation at CpNpG and asymmetric positions at different DNA loci corresponding to retroelements, transposons and repetitive DNA sequences (PubMed:12522258, PubMed:17993621, PubMed:21738482). Reduced H3K9me2 at IGN5 and IGN26 loci (PubMed:21738482).</text>
</comment>
<comment type="similarity">
    <text evidence="27">Belongs to the argonaute family. Ago subfamily.</text>
</comment>
<reference key="1">
    <citation type="journal article" date="1999" name="Nature">
        <title>Sequence and analysis of chromosome 2 of the plant Arabidopsis thaliana.</title>
        <authorList>
            <person name="Lin X."/>
            <person name="Kaul S."/>
            <person name="Rounsley S.D."/>
            <person name="Shea T.P."/>
            <person name="Benito M.-I."/>
            <person name="Town C.D."/>
            <person name="Fujii C.Y."/>
            <person name="Mason T.M."/>
            <person name="Bowman C.L."/>
            <person name="Barnstead M.E."/>
            <person name="Feldblyum T.V."/>
            <person name="Buell C.R."/>
            <person name="Ketchum K.A."/>
            <person name="Lee J.J."/>
            <person name="Ronning C.M."/>
            <person name="Koo H.L."/>
            <person name="Moffat K.S."/>
            <person name="Cronin L.A."/>
            <person name="Shen M."/>
            <person name="Pai G."/>
            <person name="Van Aken S."/>
            <person name="Umayam L."/>
            <person name="Tallon L.J."/>
            <person name="Gill J.E."/>
            <person name="Adams M.D."/>
            <person name="Carrera A.J."/>
            <person name="Creasy T.H."/>
            <person name="Goodman H.M."/>
            <person name="Somerville C.R."/>
            <person name="Copenhaver G.P."/>
            <person name="Preuss D."/>
            <person name="Nierman W.C."/>
            <person name="White O."/>
            <person name="Eisen J.A."/>
            <person name="Salzberg S.L."/>
            <person name="Fraser C.M."/>
            <person name="Venter J.C."/>
        </authorList>
    </citation>
    <scope>NUCLEOTIDE SEQUENCE [LARGE SCALE GENOMIC DNA]</scope>
    <source>
        <strain>cv. Columbia</strain>
    </source>
</reference>
<reference key="2">
    <citation type="journal article" date="2017" name="Plant J.">
        <title>Araport11: a complete reannotation of the Arabidopsis thaliana reference genome.</title>
        <authorList>
            <person name="Cheng C.Y."/>
            <person name="Krishnakumar V."/>
            <person name="Chan A.P."/>
            <person name="Thibaud-Nissen F."/>
            <person name="Schobel S."/>
            <person name="Town C.D."/>
        </authorList>
    </citation>
    <scope>GENOME REANNOTATION</scope>
    <source>
        <strain>cv. Columbia</strain>
    </source>
</reference>
<reference key="3">
    <citation type="journal article" date="2003" name="Science">
        <title>Empirical analysis of transcriptional activity in the Arabidopsis genome.</title>
        <authorList>
            <person name="Yamada K."/>
            <person name="Lim J."/>
            <person name="Dale J.M."/>
            <person name="Chen H."/>
            <person name="Shinn P."/>
            <person name="Palm C.J."/>
            <person name="Southwick A.M."/>
            <person name="Wu H.C."/>
            <person name="Kim C.J."/>
            <person name="Nguyen M."/>
            <person name="Pham P.K."/>
            <person name="Cheuk R.F."/>
            <person name="Karlin-Newmann G."/>
            <person name="Liu S.X."/>
            <person name="Lam B."/>
            <person name="Sakano H."/>
            <person name="Wu T."/>
            <person name="Yu G."/>
            <person name="Miranda M."/>
            <person name="Quach H.L."/>
            <person name="Tripp M."/>
            <person name="Chang C.H."/>
            <person name="Lee J.M."/>
            <person name="Toriumi M.J."/>
            <person name="Chan M.M."/>
            <person name="Tang C.C."/>
            <person name="Onodera C.S."/>
            <person name="Deng J.M."/>
            <person name="Akiyama K."/>
            <person name="Ansari Y."/>
            <person name="Arakawa T."/>
            <person name="Banh J."/>
            <person name="Banno F."/>
            <person name="Bowser L."/>
            <person name="Brooks S.Y."/>
            <person name="Carninci P."/>
            <person name="Chao Q."/>
            <person name="Choy N."/>
            <person name="Enju A."/>
            <person name="Goldsmith A.D."/>
            <person name="Gurjal M."/>
            <person name="Hansen N.F."/>
            <person name="Hayashizaki Y."/>
            <person name="Johnson-Hopson C."/>
            <person name="Hsuan V.W."/>
            <person name="Iida K."/>
            <person name="Karnes M."/>
            <person name="Khan S."/>
            <person name="Koesema E."/>
            <person name="Ishida J."/>
            <person name="Jiang P.X."/>
            <person name="Jones T."/>
            <person name="Kawai J."/>
            <person name="Kamiya A."/>
            <person name="Meyers C."/>
            <person name="Nakajima M."/>
            <person name="Narusaka M."/>
            <person name="Seki M."/>
            <person name="Sakurai T."/>
            <person name="Satou M."/>
            <person name="Tamse R."/>
            <person name="Vaysberg M."/>
            <person name="Wallender E.K."/>
            <person name="Wong C."/>
            <person name="Yamamura Y."/>
            <person name="Yuan S."/>
            <person name="Shinozaki K."/>
            <person name="Davis R.W."/>
            <person name="Theologis A."/>
            <person name="Ecker J.R."/>
        </authorList>
    </citation>
    <scope>NUCLEOTIDE SEQUENCE [LARGE SCALE MRNA]</scope>
    <source>
        <strain>cv. Columbia</strain>
    </source>
</reference>
<reference key="4">
    <citation type="journal article" date="2003" name="Science">
        <title>ARGONAUTE4 control of locus-specific siRNA accumulation and DNA and histone methylation.</title>
        <authorList>
            <person name="Zilberman D."/>
            <person name="Cao X."/>
            <person name="Jacobsen S.E."/>
        </authorList>
    </citation>
    <scope>FUNCTION</scope>
    <scope>DISRUPTION PHENOTYPE</scope>
</reference>
<reference key="5">
    <citation type="journal article" date="2004" name="Science">
        <title>RNA silencing genes control de novo DNA methylation.</title>
        <authorList>
            <person name="Chan S.W."/>
            <person name="Zilberman D."/>
            <person name="Xie Z."/>
            <person name="Johansen L.K."/>
            <person name="Carrington J.C."/>
            <person name="Jacobsen S.E."/>
        </authorList>
    </citation>
    <scope>FUNCTION</scope>
</reference>
<reference key="6">
    <citation type="journal article" date="2004" name="Curr. Biol.">
        <title>Role of Arabidopsis ARGONAUTE4 in RNA-directed DNA methylation triggered by inverted repeats.</title>
        <authorList>
            <person name="Zilberman D."/>
            <person name="Cao X."/>
            <person name="Johansen L.K."/>
            <person name="Xie Z."/>
            <person name="Carrington J.C."/>
            <person name="Jacobsen S.E."/>
        </authorList>
    </citation>
    <scope>FUNCTION</scope>
</reference>
<reference key="7">
    <citation type="journal article" date="2006" name="Cell">
        <title>The Arabidopsis chromatin-modifying nuclear siRNA pathway involves a nucleolar RNA processing center.</title>
        <authorList>
            <person name="Pontes O."/>
            <person name="Li C.F."/>
            <person name="Nunes P.C."/>
            <person name="Haag J."/>
            <person name="Ream T."/>
            <person name="Vitins A."/>
            <person name="Jacobsen S.E."/>
            <person name="Pikaard C.S."/>
        </authorList>
    </citation>
    <scope>FUNCTION</scope>
    <scope>SUBCELLULAR LOCATION</scope>
</reference>
<reference key="8">
    <citation type="journal article" date="2006" name="Cell">
        <title>An ARGONAUTE4-containing nuclear processing center colocalized with Cajal bodies in Arabidopsis thaliana.</title>
        <authorList>
            <person name="Li C.F."/>
            <person name="Pontes O."/>
            <person name="El-Shami M."/>
            <person name="Henderson I.R."/>
            <person name="Bernatavichute Y.V."/>
            <person name="Chan S.W.-L."/>
            <person name="Lagrange T."/>
            <person name="Pikaard C.S."/>
            <person name="Jacobsen S.E."/>
        </authorList>
    </citation>
    <scope>FUNCTION</scope>
    <scope>SUBCELLULAR LOCATION</scope>
    <scope>INTERACTION WITH NRPE1</scope>
</reference>
<reference key="9">
    <citation type="journal article" date="2006" name="Nature">
        <title>Distinct catalytic and non-catalytic roles of ARGONAUTE4 in RNA-directed DNA methylation.</title>
        <authorList>
            <person name="Qi Y."/>
            <person name="He X."/>
            <person name="Wang X.J."/>
            <person name="Kohany O."/>
            <person name="Jurka J."/>
            <person name="Hannon G.J."/>
        </authorList>
    </citation>
    <scope>FUNCTION</scope>
    <scope>MUTAGENESIS OF ASP-660; ASP-742 AND HIS-874</scope>
</reference>
<reference key="10">
    <citation type="journal article" date="2007" name="Curr. Biol.">
        <title>The Polerovirus silencing suppressor P0 targets ARGONAUTE proteins for degradation.</title>
        <authorList>
            <person name="Baumberger N."/>
            <person name="Tsai C.-H."/>
            <person name="Lie M."/>
            <person name="Havecker E."/>
            <person name="Baulcombe D.C."/>
        </authorList>
    </citation>
    <scope>FUNCTION</scope>
</reference>
<reference key="11">
    <citation type="journal article" date="2007" name="Genes Dev.">
        <title>Reiterated WG/GW motifs form functionally and evolutionarily conserved ARGONAUTE-binding platforms in RNAi-related components.</title>
        <authorList>
            <person name="El-Shami M."/>
            <person name="Pontier D."/>
            <person name="Lahmy S."/>
            <person name="Braun L."/>
            <person name="Picart C."/>
            <person name="Vega D."/>
            <person name="Hakimi M.A."/>
            <person name="Jacobsen S.E."/>
            <person name="Cooke R."/>
            <person name="Lagrange T."/>
        </authorList>
    </citation>
    <scope>FUNCTION</scope>
    <scope>INTERACTION WITH NRPE1</scope>
</reference>
<reference key="12">
    <citation type="journal article" date="2007" name="Plant Cell">
        <title>ARGONAUTE4 is required for resistance to Pseudomonas syringae in Arabidopsis.</title>
        <authorList>
            <person name="Agorio A."/>
            <person name="Vera P."/>
        </authorList>
    </citation>
    <scope>FUNCTION</scope>
    <scope>MUTAGENESIS OF GLU-641</scope>
    <scope>DISRUPTION PHENOTYPE</scope>
</reference>
<reference key="13">
    <citation type="journal article" date="2008" name="Cell">
        <title>Sorting of small RNAs into Arabidopsis argonaute complexes is directed by the 5' terminal nucleotide.</title>
        <authorList>
            <person name="Mi S."/>
            <person name="Cai T."/>
            <person name="Hu Y."/>
            <person name="Chen Y."/>
            <person name="Hodges E."/>
            <person name="Ni F."/>
            <person name="Wu L."/>
            <person name="Li S."/>
            <person name="Zhou H."/>
            <person name="Long C."/>
            <person name="Chen S."/>
            <person name="Hannon G.J."/>
            <person name="Qi Y."/>
        </authorList>
    </citation>
    <scope>FUNCTION</scope>
</reference>
<reference key="14">
    <citation type="journal article" date="2008" name="J. Virol.">
        <title>Viral genome methylation as an epigenetic defense against geminiviruses.</title>
        <authorList>
            <person name="Raja P."/>
            <person name="Sanville B.C."/>
            <person name="Buchmann R.C."/>
            <person name="Bisaro D.M."/>
        </authorList>
    </citation>
    <scope>FUNCTION</scope>
</reference>
<reference key="15">
    <citation type="journal article" date="2008" name="PLoS Genet.">
        <title>Dynamic regulation of ARGONAUTE4 within multiple nuclear bodies in Arabidopsis thaliana.</title>
        <authorList>
            <person name="Li C.F."/>
            <person name="Henderson I.R."/>
            <person name="Song L."/>
            <person name="Fedoroff N."/>
            <person name="Lagrange T."/>
            <person name="Jacobsen S.E."/>
        </authorList>
    </citation>
    <scope>SUBCELLULAR LOCATION</scope>
</reference>
<reference key="16">
    <citation type="journal article" date="2009" name="Cell">
        <title>An effector of RNA-directed DNA methylation in arabidopsis is an ARGONAUTE 4- and RNA-binding protein.</title>
        <authorList>
            <person name="He X.-J."/>
            <person name="Hsu Y.-F."/>
            <person name="Zhu S."/>
            <person name="Wierzbicki A.T."/>
            <person name="Pontes O."/>
            <person name="Pikaard C.S."/>
            <person name="Liu H.-L."/>
            <person name="Wang C.-S."/>
            <person name="Jin H."/>
            <person name="Zhu J.-K."/>
        </authorList>
    </citation>
    <scope>INTERACTION WITH RDM3</scope>
    <scope>SUBCELLULAR LOCATION</scope>
    <source>
        <strain>cv. C24</strain>
    </source>
</reference>
<reference key="17">
    <citation type="journal article" date="2009" name="EMBO Rep.">
        <title>RNA-directed DNA methylation requires an AGO4-interacting member of the SPT5 elongation factor family.</title>
        <authorList>
            <person name="Bies-Etheve N."/>
            <person name="Pontier D."/>
            <person name="Lahmy S."/>
            <person name="Picart C."/>
            <person name="Vega D."/>
            <person name="Cooke R."/>
            <person name="Lagrange T."/>
        </authorList>
    </citation>
    <scope>INTERACTION WITH RDM3</scope>
    <source>
        <strain>cv. Columbia</strain>
    </source>
</reference>
<reference key="18">
    <citation type="journal article" date="2009" name="Nat. Genet.">
        <title>RNA polymerase V transcription guides ARGONAUTE4 to chromatin.</title>
        <authorList>
            <person name="Wierzbicki A.T."/>
            <person name="Ream T.S."/>
            <person name="Haag J.R."/>
            <person name="Pikaard C.S."/>
        </authorList>
    </citation>
    <scope>FUNCTION</scope>
    <scope>INTERACTION WITH NRPE1</scope>
</reference>
<reference key="19">
    <citation type="journal article" date="2010" name="Genes Dev.">
        <title>Argonaute quenching and global changes in Dicer homeostasis caused by a pathogen-encoded GW repeat protein.</title>
        <authorList>
            <person name="Azevedo J."/>
            <person name="Garcia D."/>
            <person name="Pontier D."/>
            <person name="Ohnesorge S."/>
            <person name="Yu A."/>
            <person name="Garcia S."/>
            <person name="Braun L."/>
            <person name="Bergdoll M."/>
            <person name="Hakimi M.A."/>
            <person name="Lagrange T."/>
            <person name="Voinnet O."/>
        </authorList>
    </citation>
    <scope>INTERACTION WITH TURNIP CRINKLE VIRUS CAPSID PROTEIN P38</scope>
</reference>
<reference key="20">
    <citation type="journal article" date="2010" name="Plant Cell">
        <title>The Arabidopsis RNA-directed DNA methylation argonautes functionally diverge based on their expression and interaction with target loci.</title>
        <authorList>
            <person name="Havecker E.R."/>
            <person name="Wallbridge L.M."/>
            <person name="Hardcastle T.J."/>
            <person name="Bush M.S."/>
            <person name="Kelly K.A."/>
            <person name="Dunn R.M."/>
            <person name="Schwach F."/>
            <person name="Doonan J.H."/>
            <person name="Baulcombe D.C."/>
        </authorList>
    </citation>
    <scope>FUNCTION</scope>
    <scope>TISSUE SPECIFICITY</scope>
</reference>
<reference key="21">
    <citation type="journal article" date="2011" name="PLoS Genet.">
        <title>Independent chromatin binding of ARGONAUTE4 and SPT5L/KTF1 mediates transcriptional gene silencing.</title>
        <authorList>
            <person name="Rowley M.J."/>
            <person name="Avrutsky M.I."/>
            <person name="Sifuentes C.J."/>
            <person name="Pereira L."/>
            <person name="Wierzbicki A.T."/>
        </authorList>
    </citation>
    <scope>FUNCTION</scope>
    <scope>INTERACTION WITH CHROMATIN</scope>
    <scope>DISRUPTION PHENOTYPE</scope>
    <source>
        <strain>cv. Columbia</strain>
    </source>
</reference>
<reference key="22">
    <citation type="journal article" date="2012" name="Mol. Cell">
        <title>Ago hook and RNA helicase motifs underpin dual roles for SDE3 in antiviral defense and silencing of nonconserved intergenic regions.</title>
        <authorList>
            <person name="Garcia D."/>
            <person name="Garcia S."/>
            <person name="Pontier D."/>
            <person name="Marchais A."/>
            <person name="Renou J.P."/>
            <person name="Lagrange T."/>
            <person name="Voinnet O."/>
        </authorList>
    </citation>
    <scope>INTERACTION WITH SDE3</scope>
</reference>
<reference key="23">
    <citation type="journal article" date="2017" name="J. Biosci.">
        <title>AtMBD6, a methyl CpG binding domain protein, maintains gene silencing in Arabidopsis by interacting with RNA binding proteins.</title>
        <authorList>
            <person name="Parida A.P."/>
            <person name="Sharma A."/>
            <person name="Sharma A.K."/>
        </authorList>
    </citation>
    <scope>INTERACTION WITH MBD6</scope>
</reference>
<evidence type="ECO:0000255" key="1">
    <source>
        <dbReference type="PROSITE-ProRule" id="PRU00142"/>
    </source>
</evidence>
<evidence type="ECO:0000255" key="2">
    <source>
        <dbReference type="PROSITE-ProRule" id="PRU00150"/>
    </source>
</evidence>
<evidence type="ECO:0000255" key="3">
    <source>
        <dbReference type="PROSITE-ProRule" id="PRU00768"/>
    </source>
</evidence>
<evidence type="ECO:0000256" key="4">
    <source>
        <dbReference type="SAM" id="MobiDB-lite"/>
    </source>
</evidence>
<evidence type="ECO:0000269" key="5">
    <source>
    </source>
</evidence>
<evidence type="ECO:0000269" key="6">
    <source>
    </source>
</evidence>
<evidence type="ECO:0000269" key="7">
    <source>
    </source>
</evidence>
<evidence type="ECO:0000269" key="8">
    <source>
    </source>
</evidence>
<evidence type="ECO:0000269" key="9">
    <source>
    </source>
</evidence>
<evidence type="ECO:0000269" key="10">
    <source>
    </source>
</evidence>
<evidence type="ECO:0000269" key="11">
    <source>
    </source>
</evidence>
<evidence type="ECO:0000269" key="12">
    <source>
    </source>
</evidence>
<evidence type="ECO:0000269" key="13">
    <source>
    </source>
</evidence>
<evidence type="ECO:0000269" key="14">
    <source>
    </source>
</evidence>
<evidence type="ECO:0000269" key="15">
    <source>
    </source>
</evidence>
<evidence type="ECO:0000269" key="16">
    <source>
    </source>
</evidence>
<evidence type="ECO:0000269" key="17">
    <source>
    </source>
</evidence>
<evidence type="ECO:0000269" key="18">
    <source>
    </source>
</evidence>
<evidence type="ECO:0000269" key="19">
    <source>
    </source>
</evidence>
<evidence type="ECO:0000269" key="20">
    <source>
    </source>
</evidence>
<evidence type="ECO:0000269" key="21">
    <source>
    </source>
</evidence>
<evidence type="ECO:0000269" key="22">
    <source>
    </source>
</evidence>
<evidence type="ECO:0000269" key="23">
    <source>
    </source>
</evidence>
<evidence type="ECO:0000269" key="24">
    <source>
    </source>
</evidence>
<evidence type="ECO:0000303" key="25">
    <source>
    </source>
</evidence>
<evidence type="ECO:0000303" key="26">
    <source>
    </source>
</evidence>
<evidence type="ECO:0000305" key="27"/>
<evidence type="ECO:0000312" key="28">
    <source>
        <dbReference type="Araport" id="AT2G27040"/>
    </source>
</evidence>
<evidence type="ECO:0000312" key="29">
    <source>
        <dbReference type="EMBL" id="AAC77862.2"/>
    </source>
</evidence>
<keyword id="KW-0945">Host-virus interaction</keyword>
<keyword id="KW-0539">Nucleus</keyword>
<keyword id="KW-0611">Plant defense</keyword>
<keyword id="KW-1185">Reference proteome</keyword>
<keyword id="KW-0678">Repressor</keyword>
<keyword id="KW-0687">Ribonucleoprotein</keyword>
<keyword id="KW-0694">RNA-binding</keyword>
<keyword id="KW-0943">RNA-mediated gene silencing</keyword>
<keyword id="KW-0804">Transcription</keyword>
<keyword id="KW-0805">Transcription regulation</keyword>
<keyword id="KW-0810">Translation regulation</keyword>
<proteinExistence type="evidence at protein level"/>
<accession>Q9ZVD5</accession>
<accession>Q93VG2</accession>